<sequence length="445" mass="49813">MQENYKAKAYDILKNLNIEEGDLIEIKKGDLRIRGILLPSYSKDERIFVIKLDNGYNIGISIDNISEIKLITKNSSKAQESERKEVSRNGAKSEIKIISTGGTIVSKVEYETGAVRPALTTEEIVQFLPEINEIAKVDAEVLFSILSENMKPEYWVKIAESVKKAFDEGNTGVVIAHGTDTMAYTASALAFSLRSLQGPVVLVGSQRSSDRPSSDSAINLLSAVTTAKYAPFGEVVVNMHADSSDTYALVHRGVKVRKMHSSRRDAFQSVNDKPLAKVLWKERKLVMLDKSYMSKKGETTLDAKFDNRAFLLYYYPGLDRDFLEHILTNTKIRGLIIAGTGLGHTSSDYVELFRKATKDGIFIGMTTQCLFGRVNMNVYTTGRQLLDAGVTPLEDMLPEVALVKLMWVLAHEQDLEKIRSLMISNLVGEINPRHTLDLFPRWSYE</sequence>
<reference key="1">
    <citation type="journal article" date="2009" name="Proc. Natl. Acad. Sci. U.S.A.">
        <title>Biogeography of the Sulfolobus islandicus pan-genome.</title>
        <authorList>
            <person name="Reno M.L."/>
            <person name="Held N.L."/>
            <person name="Fields C.J."/>
            <person name="Burke P.V."/>
            <person name="Whitaker R.J."/>
        </authorList>
    </citation>
    <scope>NUCLEOTIDE SEQUENCE [LARGE SCALE GENOMIC DNA]</scope>
    <source>
        <strain>M.14.25 / Kamchatka #1</strain>
    </source>
</reference>
<organism>
    <name type="scientific">Saccharolobus islandicus (strain M.14.25 / Kamchatka #1)</name>
    <name type="common">Sulfolobus islandicus</name>
    <dbReference type="NCBI Taxonomy" id="427317"/>
    <lineage>
        <taxon>Archaea</taxon>
        <taxon>Thermoproteota</taxon>
        <taxon>Thermoprotei</taxon>
        <taxon>Sulfolobales</taxon>
        <taxon>Sulfolobaceae</taxon>
        <taxon>Saccharolobus</taxon>
    </lineage>
</organism>
<proteinExistence type="inferred from homology"/>
<accession>C3MYR5</accession>
<evidence type="ECO:0000255" key="1">
    <source>
        <dbReference type="HAMAP-Rule" id="MF_00586"/>
    </source>
</evidence>
<evidence type="ECO:0000255" key="2">
    <source>
        <dbReference type="PROSITE-ProRule" id="PRU01068"/>
    </source>
</evidence>
<dbReference type="EC" id="6.3.5.-" evidence="1"/>
<dbReference type="EMBL" id="CP001400">
    <property type="protein sequence ID" value="ACP38044.1"/>
    <property type="molecule type" value="Genomic_DNA"/>
</dbReference>
<dbReference type="RefSeq" id="WP_012711295.1">
    <property type="nucleotide sequence ID" value="NC_012588.1"/>
</dbReference>
<dbReference type="SMR" id="C3MYR5"/>
<dbReference type="GeneID" id="84061603"/>
<dbReference type="KEGG" id="sia:M1425_1289"/>
<dbReference type="HOGENOM" id="CLU_019134_2_1_2"/>
<dbReference type="Proteomes" id="UP000001350">
    <property type="component" value="Chromosome"/>
</dbReference>
<dbReference type="GO" id="GO:0004067">
    <property type="term" value="F:asparaginase activity"/>
    <property type="evidence" value="ECO:0007669"/>
    <property type="project" value="InterPro"/>
</dbReference>
<dbReference type="GO" id="GO:0005524">
    <property type="term" value="F:ATP binding"/>
    <property type="evidence" value="ECO:0007669"/>
    <property type="project" value="UniProtKB-KW"/>
</dbReference>
<dbReference type="GO" id="GO:0050567">
    <property type="term" value="F:glutaminyl-tRNA synthase (glutamine-hydrolyzing) activity"/>
    <property type="evidence" value="ECO:0007669"/>
    <property type="project" value="UniProtKB-UniRule"/>
</dbReference>
<dbReference type="GO" id="GO:0006520">
    <property type="term" value="P:amino acid metabolic process"/>
    <property type="evidence" value="ECO:0007669"/>
    <property type="project" value="InterPro"/>
</dbReference>
<dbReference type="GO" id="GO:0006450">
    <property type="term" value="P:regulation of translational fidelity"/>
    <property type="evidence" value="ECO:0007669"/>
    <property type="project" value="InterPro"/>
</dbReference>
<dbReference type="GO" id="GO:0006412">
    <property type="term" value="P:translation"/>
    <property type="evidence" value="ECO:0007669"/>
    <property type="project" value="UniProtKB-UniRule"/>
</dbReference>
<dbReference type="CDD" id="cd08962">
    <property type="entry name" value="GatD"/>
    <property type="match status" value="1"/>
</dbReference>
<dbReference type="Gene3D" id="2.30.30.520">
    <property type="match status" value="1"/>
</dbReference>
<dbReference type="Gene3D" id="3.40.50.40">
    <property type="match status" value="1"/>
</dbReference>
<dbReference type="Gene3D" id="3.40.50.1170">
    <property type="entry name" value="L-asparaginase, N-terminal domain"/>
    <property type="match status" value="1"/>
</dbReference>
<dbReference type="HAMAP" id="MF_00586">
    <property type="entry name" value="GatD"/>
    <property type="match status" value="1"/>
</dbReference>
<dbReference type="InterPro" id="IPR006033">
    <property type="entry name" value="AsnA_fam"/>
</dbReference>
<dbReference type="InterPro" id="IPR036152">
    <property type="entry name" value="Asp/glu_Ase-like_sf"/>
</dbReference>
<dbReference type="InterPro" id="IPR006034">
    <property type="entry name" value="Asparaginase/glutaminase-like"/>
</dbReference>
<dbReference type="InterPro" id="IPR027475">
    <property type="entry name" value="Asparaginase/glutaminase_AS2"/>
</dbReference>
<dbReference type="InterPro" id="IPR040919">
    <property type="entry name" value="Asparaginase_C"/>
</dbReference>
<dbReference type="InterPro" id="IPR011878">
    <property type="entry name" value="GatD"/>
</dbReference>
<dbReference type="InterPro" id="IPR040918">
    <property type="entry name" value="GatD_N"/>
</dbReference>
<dbReference type="InterPro" id="IPR037222">
    <property type="entry name" value="GatD_N_sf"/>
</dbReference>
<dbReference type="InterPro" id="IPR027473">
    <property type="entry name" value="L-asparaginase_C"/>
</dbReference>
<dbReference type="InterPro" id="IPR027474">
    <property type="entry name" value="L-asparaginase_N"/>
</dbReference>
<dbReference type="InterPro" id="IPR037152">
    <property type="entry name" value="L-asparaginase_N_sf"/>
</dbReference>
<dbReference type="NCBIfam" id="TIGR00519">
    <property type="entry name" value="asnASE_I"/>
    <property type="match status" value="1"/>
</dbReference>
<dbReference type="NCBIfam" id="TIGR02153">
    <property type="entry name" value="gatD_arch"/>
    <property type="match status" value="1"/>
</dbReference>
<dbReference type="NCBIfam" id="NF003217">
    <property type="entry name" value="PRK04183.1"/>
    <property type="match status" value="1"/>
</dbReference>
<dbReference type="PANTHER" id="PTHR11707:SF28">
    <property type="entry name" value="60 KDA LYSOPHOSPHOLIPASE"/>
    <property type="match status" value="1"/>
</dbReference>
<dbReference type="PANTHER" id="PTHR11707">
    <property type="entry name" value="L-ASPARAGINASE"/>
    <property type="match status" value="1"/>
</dbReference>
<dbReference type="Pfam" id="PF00710">
    <property type="entry name" value="Asparaginase"/>
    <property type="match status" value="1"/>
</dbReference>
<dbReference type="Pfam" id="PF17763">
    <property type="entry name" value="Asparaginase_C"/>
    <property type="match status" value="1"/>
</dbReference>
<dbReference type="Pfam" id="PF18195">
    <property type="entry name" value="GatD_N"/>
    <property type="match status" value="1"/>
</dbReference>
<dbReference type="PIRSF" id="PIRSF500175">
    <property type="entry name" value="Glu_ADT_D"/>
    <property type="match status" value="1"/>
</dbReference>
<dbReference type="PIRSF" id="PIRSF001220">
    <property type="entry name" value="L-ASNase_gatD"/>
    <property type="match status" value="1"/>
</dbReference>
<dbReference type="PRINTS" id="PR00139">
    <property type="entry name" value="ASNGLNASE"/>
</dbReference>
<dbReference type="SMART" id="SM00870">
    <property type="entry name" value="Asparaginase"/>
    <property type="match status" value="1"/>
</dbReference>
<dbReference type="SUPFAM" id="SSF141300">
    <property type="entry name" value="GatD N-terminal domain-like"/>
    <property type="match status" value="1"/>
</dbReference>
<dbReference type="SUPFAM" id="SSF53774">
    <property type="entry name" value="Glutaminase/Asparaginase"/>
    <property type="match status" value="1"/>
</dbReference>
<dbReference type="PROSITE" id="PS00917">
    <property type="entry name" value="ASN_GLN_ASE_2"/>
    <property type="match status" value="1"/>
</dbReference>
<dbReference type="PROSITE" id="PS51732">
    <property type="entry name" value="ASN_GLN_ASE_3"/>
    <property type="match status" value="1"/>
</dbReference>
<comment type="function">
    <text evidence="1">Allows the formation of correctly charged Gln-tRNA(Gln) through the transamidation of misacylated Glu-tRNA(Gln) in organisms which lack glutaminyl-tRNA synthetase. The reaction takes place in the presence of glutamine and ATP through an activated gamma-phospho-Glu-tRNA(Gln). The GatDE system is specific for glutamate and does not act on aspartate.</text>
</comment>
<comment type="catalytic activity">
    <reaction evidence="1">
        <text>L-glutamyl-tRNA(Gln) + L-glutamine + ATP + H2O = L-glutaminyl-tRNA(Gln) + L-glutamate + ADP + phosphate + H(+)</text>
        <dbReference type="Rhea" id="RHEA:17521"/>
        <dbReference type="Rhea" id="RHEA-COMP:9681"/>
        <dbReference type="Rhea" id="RHEA-COMP:9684"/>
        <dbReference type="ChEBI" id="CHEBI:15377"/>
        <dbReference type="ChEBI" id="CHEBI:15378"/>
        <dbReference type="ChEBI" id="CHEBI:29985"/>
        <dbReference type="ChEBI" id="CHEBI:30616"/>
        <dbReference type="ChEBI" id="CHEBI:43474"/>
        <dbReference type="ChEBI" id="CHEBI:58359"/>
        <dbReference type="ChEBI" id="CHEBI:78520"/>
        <dbReference type="ChEBI" id="CHEBI:78521"/>
        <dbReference type="ChEBI" id="CHEBI:456216"/>
    </reaction>
</comment>
<comment type="subunit">
    <text evidence="1">Heterodimer of GatD and GatE.</text>
</comment>
<comment type="similarity">
    <text evidence="1">Belongs to the asparaginase 1 family. GatD subfamily.</text>
</comment>
<keyword id="KW-0067">ATP-binding</keyword>
<keyword id="KW-0436">Ligase</keyword>
<keyword id="KW-0547">Nucleotide-binding</keyword>
<keyword id="KW-0648">Protein biosynthesis</keyword>
<protein>
    <recommendedName>
        <fullName evidence="1">Glutamyl-tRNA(Gln) amidotransferase subunit D</fullName>
        <shortName evidence="1">Glu-ADT subunit D</shortName>
        <ecNumber evidence="1">6.3.5.-</ecNumber>
    </recommendedName>
</protein>
<name>GATD_SACI4</name>
<gene>
    <name evidence="1" type="primary">gatD</name>
    <name type="ordered locus">M1425_1289</name>
</gene>
<feature type="chain" id="PRO_1000212152" description="Glutamyl-tRNA(Gln) amidotransferase subunit D">
    <location>
        <begin position="1"/>
        <end position="445"/>
    </location>
</feature>
<feature type="domain" description="Asparaginase/glutaminase" evidence="2">
    <location>
        <begin position="93"/>
        <end position="425"/>
    </location>
</feature>
<feature type="active site" evidence="1">
    <location>
        <position position="103"/>
    </location>
</feature>
<feature type="active site" evidence="1">
    <location>
        <position position="179"/>
    </location>
</feature>
<feature type="active site" evidence="1">
    <location>
        <position position="180"/>
    </location>
</feature>
<feature type="active site" evidence="1">
    <location>
        <position position="258"/>
    </location>
</feature>